<sequence>MLEADNLECVRGERRLFAGLDFKLEGGELLNLQGRNGAGKTSLLRMLIGLLPPEAGEIRWKGKSIKTQGDDFRADLCYLGHLNAIKEELTPLENLLAAAHLADEELSEDDAIDALEQVGLAGREDLACKYLSQGQKRRVALARLVKEKRPLWILDEPFVALDVAAVDWLAGIISGHLQRGGMAVMTTHQQVNIPAGTVRELRLG</sequence>
<protein>
    <recommendedName>
        <fullName evidence="1">Cytochrome c biogenesis ATP-binding export protein CcmA</fullName>
        <ecNumber evidence="1">7.6.2.5</ecNumber>
    </recommendedName>
    <alternativeName>
        <fullName evidence="1">Heme exporter protein A</fullName>
    </alternativeName>
</protein>
<accession>Q478L3</accession>
<feature type="chain" id="PRO_0000271921" description="Cytochrome c biogenesis ATP-binding export protein CcmA">
    <location>
        <begin position="1"/>
        <end position="204"/>
    </location>
</feature>
<feature type="domain" description="ABC transporter" evidence="1">
    <location>
        <begin position="2"/>
        <end position="203"/>
    </location>
</feature>
<feature type="binding site" evidence="1">
    <location>
        <begin position="34"/>
        <end position="41"/>
    </location>
    <ligand>
        <name>ATP</name>
        <dbReference type="ChEBI" id="CHEBI:30616"/>
    </ligand>
</feature>
<keyword id="KW-0067">ATP-binding</keyword>
<keyword id="KW-0997">Cell inner membrane</keyword>
<keyword id="KW-1003">Cell membrane</keyword>
<keyword id="KW-0201">Cytochrome c-type biogenesis</keyword>
<keyword id="KW-0472">Membrane</keyword>
<keyword id="KW-0547">Nucleotide-binding</keyword>
<keyword id="KW-1278">Translocase</keyword>
<keyword id="KW-0813">Transport</keyword>
<name>CCMA_DECAR</name>
<proteinExistence type="inferred from homology"/>
<gene>
    <name evidence="1" type="primary">ccmA</name>
    <name type="ordered locus">Daro_3991</name>
</gene>
<organism>
    <name type="scientific">Dechloromonas aromatica (strain RCB)</name>
    <dbReference type="NCBI Taxonomy" id="159087"/>
    <lineage>
        <taxon>Bacteria</taxon>
        <taxon>Pseudomonadati</taxon>
        <taxon>Pseudomonadota</taxon>
        <taxon>Betaproteobacteria</taxon>
        <taxon>Rhodocyclales</taxon>
        <taxon>Azonexaceae</taxon>
        <taxon>Dechloromonas</taxon>
    </lineage>
</organism>
<evidence type="ECO:0000255" key="1">
    <source>
        <dbReference type="HAMAP-Rule" id="MF_01707"/>
    </source>
</evidence>
<comment type="function">
    <text evidence="1">Part of the ABC transporter complex CcmAB involved in the biogenesis of c-type cytochromes; once thought to export heme, this seems not to be the case, but its exact role is uncertain. Responsible for energy coupling to the transport system.</text>
</comment>
<comment type="catalytic activity">
    <reaction evidence="1">
        <text>heme b(in) + ATP + H2O = heme b(out) + ADP + phosphate + H(+)</text>
        <dbReference type="Rhea" id="RHEA:19261"/>
        <dbReference type="ChEBI" id="CHEBI:15377"/>
        <dbReference type="ChEBI" id="CHEBI:15378"/>
        <dbReference type="ChEBI" id="CHEBI:30616"/>
        <dbReference type="ChEBI" id="CHEBI:43474"/>
        <dbReference type="ChEBI" id="CHEBI:60344"/>
        <dbReference type="ChEBI" id="CHEBI:456216"/>
        <dbReference type="EC" id="7.6.2.5"/>
    </reaction>
</comment>
<comment type="subunit">
    <text evidence="1">The complex is composed of two ATP-binding proteins (CcmA) and two transmembrane proteins (CcmB).</text>
</comment>
<comment type="subcellular location">
    <subcellularLocation>
        <location evidence="1">Cell inner membrane</location>
        <topology evidence="1">Peripheral membrane protein</topology>
    </subcellularLocation>
</comment>
<comment type="similarity">
    <text evidence="1">Belongs to the ABC transporter superfamily. CcmA exporter (TC 3.A.1.107) family.</text>
</comment>
<dbReference type="EC" id="7.6.2.5" evidence="1"/>
<dbReference type="EMBL" id="CP000089">
    <property type="protein sequence ID" value="AAZ48718.1"/>
    <property type="molecule type" value="Genomic_DNA"/>
</dbReference>
<dbReference type="SMR" id="Q478L3"/>
<dbReference type="STRING" id="159087.Daro_3991"/>
<dbReference type="KEGG" id="dar:Daro_3991"/>
<dbReference type="eggNOG" id="COG4133">
    <property type="taxonomic scope" value="Bacteria"/>
</dbReference>
<dbReference type="HOGENOM" id="CLU_000604_1_2_4"/>
<dbReference type="OrthoDB" id="9800654at2"/>
<dbReference type="GO" id="GO:0005886">
    <property type="term" value="C:plasma membrane"/>
    <property type="evidence" value="ECO:0007669"/>
    <property type="project" value="UniProtKB-SubCell"/>
</dbReference>
<dbReference type="GO" id="GO:0015439">
    <property type="term" value="F:ABC-type heme transporter activity"/>
    <property type="evidence" value="ECO:0007669"/>
    <property type="project" value="UniProtKB-EC"/>
</dbReference>
<dbReference type="GO" id="GO:0005524">
    <property type="term" value="F:ATP binding"/>
    <property type="evidence" value="ECO:0007669"/>
    <property type="project" value="UniProtKB-KW"/>
</dbReference>
<dbReference type="GO" id="GO:0016887">
    <property type="term" value="F:ATP hydrolysis activity"/>
    <property type="evidence" value="ECO:0007669"/>
    <property type="project" value="InterPro"/>
</dbReference>
<dbReference type="GO" id="GO:0017004">
    <property type="term" value="P:cytochrome complex assembly"/>
    <property type="evidence" value="ECO:0007669"/>
    <property type="project" value="UniProtKB-KW"/>
</dbReference>
<dbReference type="Gene3D" id="3.40.50.300">
    <property type="entry name" value="P-loop containing nucleotide triphosphate hydrolases"/>
    <property type="match status" value="1"/>
</dbReference>
<dbReference type="InterPro" id="IPR003593">
    <property type="entry name" value="AAA+_ATPase"/>
</dbReference>
<dbReference type="InterPro" id="IPR003439">
    <property type="entry name" value="ABC_transporter-like_ATP-bd"/>
</dbReference>
<dbReference type="InterPro" id="IPR017871">
    <property type="entry name" value="ABC_transporter-like_CS"/>
</dbReference>
<dbReference type="InterPro" id="IPR005895">
    <property type="entry name" value="ABC_transptr_haem_export_CcmA"/>
</dbReference>
<dbReference type="InterPro" id="IPR027417">
    <property type="entry name" value="P-loop_NTPase"/>
</dbReference>
<dbReference type="NCBIfam" id="TIGR01189">
    <property type="entry name" value="ccmA"/>
    <property type="match status" value="1"/>
</dbReference>
<dbReference type="NCBIfam" id="NF010061">
    <property type="entry name" value="PRK13538.1"/>
    <property type="match status" value="1"/>
</dbReference>
<dbReference type="PANTHER" id="PTHR43499">
    <property type="entry name" value="ABC TRANSPORTER I FAMILY MEMBER 1"/>
    <property type="match status" value="1"/>
</dbReference>
<dbReference type="PANTHER" id="PTHR43499:SF1">
    <property type="entry name" value="ABC TRANSPORTER I FAMILY MEMBER 1"/>
    <property type="match status" value="1"/>
</dbReference>
<dbReference type="Pfam" id="PF00005">
    <property type="entry name" value="ABC_tran"/>
    <property type="match status" value="1"/>
</dbReference>
<dbReference type="SMART" id="SM00382">
    <property type="entry name" value="AAA"/>
    <property type="match status" value="1"/>
</dbReference>
<dbReference type="SUPFAM" id="SSF52540">
    <property type="entry name" value="P-loop containing nucleoside triphosphate hydrolases"/>
    <property type="match status" value="1"/>
</dbReference>
<dbReference type="PROSITE" id="PS00211">
    <property type="entry name" value="ABC_TRANSPORTER_1"/>
    <property type="match status" value="1"/>
</dbReference>
<dbReference type="PROSITE" id="PS50893">
    <property type="entry name" value="ABC_TRANSPORTER_2"/>
    <property type="match status" value="1"/>
</dbReference>
<dbReference type="PROSITE" id="PS51243">
    <property type="entry name" value="CCMA"/>
    <property type="match status" value="1"/>
</dbReference>
<reference key="1">
    <citation type="journal article" date="2009" name="BMC Genomics">
        <title>Metabolic analysis of the soil microbe Dechloromonas aromatica str. RCB: indications of a surprisingly complex life-style and cryptic anaerobic pathways for aromatic degradation.</title>
        <authorList>
            <person name="Salinero K.K."/>
            <person name="Keller K."/>
            <person name="Feil W.S."/>
            <person name="Feil H."/>
            <person name="Trong S."/>
            <person name="Di Bartolo G."/>
            <person name="Lapidus A."/>
        </authorList>
    </citation>
    <scope>NUCLEOTIDE SEQUENCE [LARGE SCALE GENOMIC DNA]</scope>
    <source>
        <strain>RCB</strain>
    </source>
</reference>